<evidence type="ECO:0000255" key="1">
    <source>
        <dbReference type="HAMAP-Rule" id="MF_01328"/>
    </source>
</evidence>
<evidence type="ECO:0000256" key="2">
    <source>
        <dbReference type="SAM" id="MobiDB-lite"/>
    </source>
</evidence>
<evidence type="ECO:0000305" key="3"/>
<evidence type="ECO:0007829" key="4">
    <source>
        <dbReference type="PDB" id="8FN2"/>
    </source>
</evidence>
<gene>
    <name evidence="1" type="primary">rplD</name>
    <name type="ordered locus">BB_0479</name>
</gene>
<dbReference type="EMBL" id="U78193">
    <property type="protein sequence ID" value="AAB36823.1"/>
    <property type="molecule type" value="Genomic_DNA"/>
</dbReference>
<dbReference type="EMBL" id="AE000783">
    <property type="protein sequence ID" value="AAC66863.1"/>
    <property type="molecule type" value="Genomic_DNA"/>
</dbReference>
<dbReference type="PIR" id="F70159">
    <property type="entry name" value="F70159"/>
</dbReference>
<dbReference type="RefSeq" id="NP_212613.1">
    <property type="nucleotide sequence ID" value="NC_001318.1"/>
</dbReference>
<dbReference type="RefSeq" id="WP_002557070.1">
    <property type="nucleotide sequence ID" value="NC_001318.1"/>
</dbReference>
<dbReference type="PDB" id="8FMW">
    <property type="method" value="EM"/>
    <property type="resolution" value="2.86 A"/>
    <property type="chains" value="AF=1-209"/>
</dbReference>
<dbReference type="PDB" id="8FN2">
    <property type="method" value="EM"/>
    <property type="resolution" value="3.40 A"/>
    <property type="chains" value="F=1-209"/>
</dbReference>
<dbReference type="PDBsum" id="8FMW"/>
<dbReference type="PDBsum" id="8FN2"/>
<dbReference type="EMDB" id="EMD-29298"/>
<dbReference type="EMDB" id="EMD-29304"/>
<dbReference type="SMR" id="P94268"/>
<dbReference type="STRING" id="224326.BB_0479"/>
<dbReference type="PaxDb" id="224326-BB_0479"/>
<dbReference type="EnsemblBacteria" id="AAC66863">
    <property type="protein sequence ID" value="AAC66863"/>
    <property type="gene ID" value="BB_0479"/>
</dbReference>
<dbReference type="KEGG" id="bbu:BB_0479"/>
<dbReference type="PATRIC" id="fig|224326.49.peg.870"/>
<dbReference type="HOGENOM" id="CLU_041575_5_2_12"/>
<dbReference type="OrthoDB" id="9803201at2"/>
<dbReference type="Proteomes" id="UP000001807">
    <property type="component" value="Chromosome"/>
</dbReference>
<dbReference type="GO" id="GO:1990904">
    <property type="term" value="C:ribonucleoprotein complex"/>
    <property type="evidence" value="ECO:0007669"/>
    <property type="project" value="UniProtKB-KW"/>
</dbReference>
<dbReference type="GO" id="GO:0005840">
    <property type="term" value="C:ribosome"/>
    <property type="evidence" value="ECO:0007669"/>
    <property type="project" value="UniProtKB-KW"/>
</dbReference>
<dbReference type="GO" id="GO:0019843">
    <property type="term" value="F:rRNA binding"/>
    <property type="evidence" value="ECO:0007669"/>
    <property type="project" value="UniProtKB-UniRule"/>
</dbReference>
<dbReference type="GO" id="GO:0003735">
    <property type="term" value="F:structural constituent of ribosome"/>
    <property type="evidence" value="ECO:0007669"/>
    <property type="project" value="InterPro"/>
</dbReference>
<dbReference type="GO" id="GO:0006412">
    <property type="term" value="P:translation"/>
    <property type="evidence" value="ECO:0007669"/>
    <property type="project" value="UniProtKB-UniRule"/>
</dbReference>
<dbReference type="Gene3D" id="3.40.1370.10">
    <property type="match status" value="1"/>
</dbReference>
<dbReference type="HAMAP" id="MF_01328_B">
    <property type="entry name" value="Ribosomal_uL4_B"/>
    <property type="match status" value="1"/>
</dbReference>
<dbReference type="InterPro" id="IPR002136">
    <property type="entry name" value="Ribosomal_uL4"/>
</dbReference>
<dbReference type="InterPro" id="IPR013005">
    <property type="entry name" value="Ribosomal_uL4-like"/>
</dbReference>
<dbReference type="InterPro" id="IPR023574">
    <property type="entry name" value="Ribosomal_uL4_dom_sf"/>
</dbReference>
<dbReference type="NCBIfam" id="TIGR03953">
    <property type="entry name" value="rplD_bact"/>
    <property type="match status" value="1"/>
</dbReference>
<dbReference type="PANTHER" id="PTHR10746">
    <property type="entry name" value="50S RIBOSOMAL PROTEIN L4"/>
    <property type="match status" value="1"/>
</dbReference>
<dbReference type="PANTHER" id="PTHR10746:SF6">
    <property type="entry name" value="LARGE RIBOSOMAL SUBUNIT PROTEIN UL4M"/>
    <property type="match status" value="1"/>
</dbReference>
<dbReference type="Pfam" id="PF00573">
    <property type="entry name" value="Ribosomal_L4"/>
    <property type="match status" value="1"/>
</dbReference>
<dbReference type="SUPFAM" id="SSF52166">
    <property type="entry name" value="Ribosomal protein L4"/>
    <property type="match status" value="1"/>
</dbReference>
<name>RL4_BORBU</name>
<accession>P94268</accession>
<accession>O51433</accession>
<comment type="function">
    <text evidence="1">One of the primary rRNA binding proteins, this protein initially binds near the 5'-end of the 23S rRNA. It is important during the early stages of 50S assembly. It makes multiple contacts with different domains of the 23S rRNA in the assembled 50S subunit and ribosome.</text>
</comment>
<comment type="function">
    <text evidence="1">Forms part of the polypeptide exit tunnel.</text>
</comment>
<comment type="subunit">
    <text evidence="1">Part of the 50S ribosomal subunit.</text>
</comment>
<comment type="similarity">
    <text evidence="1">Belongs to the universal ribosomal protein uL4 family.</text>
</comment>
<proteinExistence type="evidence at protein level"/>
<protein>
    <recommendedName>
        <fullName evidence="1">Large ribosomal subunit protein uL4</fullName>
    </recommendedName>
    <alternativeName>
        <fullName evidence="3">50S ribosomal protein L4</fullName>
    </alternativeName>
</protein>
<feature type="chain" id="PRO_0000129188" description="Large ribosomal subunit protein uL4">
    <location>
        <begin position="1"/>
        <end position="209"/>
    </location>
</feature>
<feature type="region of interest" description="Disordered" evidence="2">
    <location>
        <begin position="46"/>
        <end position="72"/>
    </location>
</feature>
<feature type="compositionally biased region" description="Basic residues" evidence="2">
    <location>
        <begin position="59"/>
        <end position="72"/>
    </location>
</feature>
<feature type="sequence conflict" description="In Ref. 1; AAB36823." evidence="3" ref="1">
    <original>Q</original>
    <variation>H</variation>
    <location>
        <position position="66"/>
    </location>
</feature>
<feature type="sequence conflict" description="In Ref. 1; AAB36823." evidence="3" ref="1">
    <original>N</original>
    <variation>S</variation>
    <location>
        <position position="130"/>
    </location>
</feature>
<feature type="strand" evidence="4">
    <location>
        <begin position="2"/>
        <end position="6"/>
    </location>
</feature>
<feature type="strand" evidence="4">
    <location>
        <begin position="10"/>
        <end position="17"/>
    </location>
</feature>
<feature type="helix" evidence="4">
    <location>
        <begin position="20"/>
        <end position="23"/>
    </location>
</feature>
<feature type="helix" evidence="4">
    <location>
        <begin position="29"/>
        <end position="41"/>
    </location>
</feature>
<feature type="turn" evidence="4">
    <location>
        <begin position="53"/>
        <end position="55"/>
    </location>
</feature>
<feature type="strand" evidence="4">
    <location>
        <begin position="56"/>
        <end position="58"/>
    </location>
</feature>
<feature type="strand" evidence="4">
    <location>
        <begin position="66"/>
        <end position="71"/>
    </location>
</feature>
<feature type="strand" evidence="4">
    <location>
        <begin position="80"/>
        <end position="82"/>
    </location>
</feature>
<feature type="helix" evidence="4">
    <location>
        <begin position="102"/>
        <end position="117"/>
    </location>
</feature>
<feature type="turn" evidence="4">
    <location>
        <begin position="120"/>
        <end position="122"/>
    </location>
</feature>
<feature type="strand" evidence="4">
    <location>
        <begin position="123"/>
        <end position="126"/>
    </location>
</feature>
<feature type="helix" evidence="4">
    <location>
        <begin position="137"/>
        <end position="146"/>
    </location>
</feature>
<feature type="strand" evidence="4">
    <location>
        <begin position="149"/>
        <end position="151"/>
    </location>
</feature>
<feature type="strand" evidence="4">
    <location>
        <begin position="153"/>
        <end position="159"/>
    </location>
</feature>
<feature type="helix" evidence="4">
    <location>
        <begin position="162"/>
        <end position="168"/>
    </location>
</feature>
<feature type="strand" evidence="4">
    <location>
        <begin position="174"/>
        <end position="178"/>
    </location>
</feature>
<feature type="helix" evidence="4">
    <location>
        <begin position="179"/>
        <end position="181"/>
    </location>
</feature>
<feature type="helix" evidence="4">
    <location>
        <begin position="184"/>
        <end position="189"/>
    </location>
</feature>
<feature type="strand" evidence="4">
    <location>
        <begin position="191"/>
        <end position="196"/>
    </location>
</feature>
<feature type="helix" evidence="4">
    <location>
        <begin position="197"/>
        <end position="208"/>
    </location>
</feature>
<keyword id="KW-0002">3D-structure</keyword>
<keyword id="KW-1185">Reference proteome</keyword>
<keyword id="KW-0687">Ribonucleoprotein</keyword>
<keyword id="KW-0689">Ribosomal protein</keyword>
<keyword id="KW-0694">RNA-binding</keyword>
<keyword id="KW-0699">rRNA-binding</keyword>
<organism>
    <name type="scientific">Borreliella burgdorferi (strain ATCC 35210 / DSM 4680 / CIP 102532 / B31)</name>
    <name type="common">Borrelia burgdorferi</name>
    <dbReference type="NCBI Taxonomy" id="224326"/>
    <lineage>
        <taxon>Bacteria</taxon>
        <taxon>Pseudomonadati</taxon>
        <taxon>Spirochaetota</taxon>
        <taxon>Spirochaetia</taxon>
        <taxon>Spirochaetales</taxon>
        <taxon>Borreliaceae</taxon>
        <taxon>Borreliella</taxon>
    </lineage>
</organism>
<reference key="1">
    <citation type="submission" date="1996-12" db="EMBL/GenBank/DDBJ databases">
        <authorList>
            <person name="Perlee L."/>
            <person name="Qi H."/>
            <person name="Schwartz I."/>
        </authorList>
    </citation>
    <scope>NUCLEOTIDE SEQUENCE [GENOMIC DNA]</scope>
    <source>
        <strain>ATCC 35210 / DSM 4680 / CIP 102532 / B31</strain>
    </source>
</reference>
<reference key="2">
    <citation type="journal article" date="1997" name="Nature">
        <title>Genomic sequence of a Lyme disease spirochaete, Borrelia burgdorferi.</title>
        <authorList>
            <person name="Fraser C.M."/>
            <person name="Casjens S."/>
            <person name="Huang W.M."/>
            <person name="Sutton G.G."/>
            <person name="Clayton R.A."/>
            <person name="Lathigra R."/>
            <person name="White O."/>
            <person name="Ketchum K.A."/>
            <person name="Dodson R.J."/>
            <person name="Hickey E.K."/>
            <person name="Gwinn M.L."/>
            <person name="Dougherty B.A."/>
            <person name="Tomb J.-F."/>
            <person name="Fleischmann R.D."/>
            <person name="Richardson D.L."/>
            <person name="Peterson J.D."/>
            <person name="Kerlavage A.R."/>
            <person name="Quackenbush J."/>
            <person name="Salzberg S.L."/>
            <person name="Hanson M."/>
            <person name="van Vugt R."/>
            <person name="Palmer N."/>
            <person name="Adams M.D."/>
            <person name="Gocayne J.D."/>
            <person name="Weidman J.F."/>
            <person name="Utterback T.R."/>
            <person name="Watthey L."/>
            <person name="McDonald L.A."/>
            <person name="Artiach P."/>
            <person name="Bowman C."/>
            <person name="Garland S.A."/>
            <person name="Fujii C."/>
            <person name="Cotton M.D."/>
            <person name="Horst K."/>
            <person name="Roberts K.M."/>
            <person name="Hatch B."/>
            <person name="Smith H.O."/>
            <person name="Venter J.C."/>
        </authorList>
    </citation>
    <scope>NUCLEOTIDE SEQUENCE [LARGE SCALE GENOMIC DNA]</scope>
    <source>
        <strain>ATCC 35210 / DSM 4680 / CIP 102532 / B31</strain>
    </source>
</reference>
<sequence>MERKVFSKDGKEIGTINLDDRVFNIEISHGSIYNAIKNELSNLRVGTSSTKTRSEVRGSSKKPWKQKGTGRARVGTKRNPVWIGGGIALGPKPRDYSYRLPKKVKKLAFKSVLSLRAADENSFKVIENFNVESGKTKDLALIIKNFASFNGKVVILLGNDDQMIKRAGKNIRDLKILSFDKLRVVDLFYAKNLIALESAVNKLNEFYIK</sequence>